<evidence type="ECO:0000255" key="1">
    <source>
        <dbReference type="HAMAP-Rule" id="MF_00020"/>
    </source>
</evidence>
<accession>Q18B36</accession>
<feature type="chain" id="PRO_1000002223" description="Acetate kinase">
    <location>
        <begin position="1"/>
        <end position="398"/>
    </location>
</feature>
<feature type="active site" description="Proton donor/acceptor" evidence="1">
    <location>
        <position position="149"/>
    </location>
</feature>
<feature type="binding site" evidence="1">
    <location>
        <position position="7"/>
    </location>
    <ligand>
        <name>Mg(2+)</name>
        <dbReference type="ChEBI" id="CHEBI:18420"/>
    </ligand>
</feature>
<feature type="binding site" evidence="1">
    <location>
        <position position="14"/>
    </location>
    <ligand>
        <name>ATP</name>
        <dbReference type="ChEBI" id="CHEBI:30616"/>
    </ligand>
</feature>
<feature type="binding site" evidence="1">
    <location>
        <position position="92"/>
    </location>
    <ligand>
        <name>substrate</name>
    </ligand>
</feature>
<feature type="binding site" evidence="1">
    <location>
        <begin position="209"/>
        <end position="213"/>
    </location>
    <ligand>
        <name>ATP</name>
        <dbReference type="ChEBI" id="CHEBI:30616"/>
    </ligand>
</feature>
<feature type="binding site" evidence="1">
    <location>
        <begin position="284"/>
        <end position="286"/>
    </location>
    <ligand>
        <name>ATP</name>
        <dbReference type="ChEBI" id="CHEBI:30616"/>
    </ligand>
</feature>
<feature type="binding site" evidence="1">
    <location>
        <begin position="332"/>
        <end position="336"/>
    </location>
    <ligand>
        <name>ATP</name>
        <dbReference type="ChEBI" id="CHEBI:30616"/>
    </ligand>
</feature>
<feature type="binding site" evidence="1">
    <location>
        <position position="385"/>
    </location>
    <ligand>
        <name>Mg(2+)</name>
        <dbReference type="ChEBI" id="CHEBI:18420"/>
    </ligand>
</feature>
<feature type="site" description="Transition state stabilizer" evidence="1">
    <location>
        <position position="181"/>
    </location>
</feature>
<feature type="site" description="Transition state stabilizer" evidence="1">
    <location>
        <position position="242"/>
    </location>
</feature>
<gene>
    <name evidence="1" type="primary">ackA</name>
    <name type="ordered locus">CD630_11750</name>
</gene>
<sequence>MKILVLNCGSSSLKYQLIDMNNEEVLCIGLVERIGIEGSILKHEKAGRDDKYVVEQPMKDHKDAIALVLEAVAHPEFGAVKEMKEIDAVGHRVVHAGEKFATSVVITPEVEEALKECIDLAPLHNPANIMGIDACKAILPDVPMVGVFDTAFHQTMPKSSYLYGLPHELYTKYGVRRYGFHGTSHNYVSQRAAEILGKDIKDLKIVTCHLGNGASIAAVDGGKCVDTSMGFTPLEGLIMGTRCGDIDPAILPFLMRKEGLDADGLDKLMNKESGVYGMTGISSDFRDIEDAAKNGDERAQATLEAYVKKVQKYIGAYAAEMNGLDVVVFTAGVGENGKAIRADIASNMEFLGMKLDKEANDVRGKETVISTADSKVKMLLIPTNEELMIARDTLRLVK</sequence>
<keyword id="KW-0067">ATP-binding</keyword>
<keyword id="KW-0963">Cytoplasm</keyword>
<keyword id="KW-0418">Kinase</keyword>
<keyword id="KW-0460">Magnesium</keyword>
<keyword id="KW-0479">Metal-binding</keyword>
<keyword id="KW-0547">Nucleotide-binding</keyword>
<keyword id="KW-1185">Reference proteome</keyword>
<keyword id="KW-0808">Transferase</keyword>
<organism>
    <name type="scientific">Clostridioides difficile (strain 630)</name>
    <name type="common">Peptoclostridium difficile</name>
    <dbReference type="NCBI Taxonomy" id="272563"/>
    <lineage>
        <taxon>Bacteria</taxon>
        <taxon>Bacillati</taxon>
        <taxon>Bacillota</taxon>
        <taxon>Clostridia</taxon>
        <taxon>Peptostreptococcales</taxon>
        <taxon>Peptostreptococcaceae</taxon>
        <taxon>Clostridioides</taxon>
    </lineage>
</organism>
<protein>
    <recommendedName>
        <fullName evidence="1">Acetate kinase</fullName>
        <ecNumber evidence="1">2.7.2.1</ecNumber>
    </recommendedName>
    <alternativeName>
        <fullName evidence="1">Acetokinase</fullName>
    </alternativeName>
</protein>
<dbReference type="EC" id="2.7.2.1" evidence="1"/>
<dbReference type="EMBL" id="AM180355">
    <property type="protein sequence ID" value="CAJ68028.1"/>
    <property type="molecule type" value="Genomic_DNA"/>
</dbReference>
<dbReference type="RefSeq" id="WP_003438096.1">
    <property type="nucleotide sequence ID" value="NZ_JAUPES010000024.1"/>
</dbReference>
<dbReference type="RefSeq" id="YP_001087667.1">
    <property type="nucleotide sequence ID" value="NC_009089.1"/>
</dbReference>
<dbReference type="SMR" id="Q18B36"/>
<dbReference type="STRING" id="272563.CD630_11750"/>
<dbReference type="EnsemblBacteria" id="CAJ68028">
    <property type="protein sequence ID" value="CAJ68028"/>
    <property type="gene ID" value="CD630_11750"/>
</dbReference>
<dbReference type="KEGG" id="cdf:CD630_11750"/>
<dbReference type="KEGG" id="pdc:CDIF630_01323"/>
<dbReference type="PATRIC" id="fig|272563.120.peg.1225"/>
<dbReference type="eggNOG" id="COG0282">
    <property type="taxonomic scope" value="Bacteria"/>
</dbReference>
<dbReference type="OrthoDB" id="9802453at2"/>
<dbReference type="PhylomeDB" id="Q18B36"/>
<dbReference type="BioCyc" id="PDIF272563:G12WB-1305-MONOMER"/>
<dbReference type="UniPathway" id="UPA00340">
    <property type="reaction ID" value="UER00458"/>
</dbReference>
<dbReference type="Proteomes" id="UP000001978">
    <property type="component" value="Chromosome"/>
</dbReference>
<dbReference type="GO" id="GO:0005737">
    <property type="term" value="C:cytoplasm"/>
    <property type="evidence" value="ECO:0007669"/>
    <property type="project" value="UniProtKB-SubCell"/>
</dbReference>
<dbReference type="GO" id="GO:0008776">
    <property type="term" value="F:acetate kinase activity"/>
    <property type="evidence" value="ECO:0007669"/>
    <property type="project" value="UniProtKB-UniRule"/>
</dbReference>
<dbReference type="GO" id="GO:0005524">
    <property type="term" value="F:ATP binding"/>
    <property type="evidence" value="ECO:0007669"/>
    <property type="project" value="UniProtKB-KW"/>
</dbReference>
<dbReference type="GO" id="GO:0000287">
    <property type="term" value="F:magnesium ion binding"/>
    <property type="evidence" value="ECO:0007669"/>
    <property type="project" value="UniProtKB-UniRule"/>
</dbReference>
<dbReference type="GO" id="GO:0006083">
    <property type="term" value="P:acetate metabolic process"/>
    <property type="evidence" value="ECO:0007669"/>
    <property type="project" value="TreeGrafter"/>
</dbReference>
<dbReference type="GO" id="GO:0006085">
    <property type="term" value="P:acetyl-CoA biosynthetic process"/>
    <property type="evidence" value="ECO:0007669"/>
    <property type="project" value="UniProtKB-UniRule"/>
</dbReference>
<dbReference type="CDD" id="cd24010">
    <property type="entry name" value="ASKHA_NBD_AcK_PK"/>
    <property type="match status" value="1"/>
</dbReference>
<dbReference type="Gene3D" id="3.30.420.40">
    <property type="match status" value="2"/>
</dbReference>
<dbReference type="HAMAP" id="MF_00020">
    <property type="entry name" value="Acetate_kinase"/>
    <property type="match status" value="1"/>
</dbReference>
<dbReference type="InterPro" id="IPR004372">
    <property type="entry name" value="Ac/propionate_kinase"/>
</dbReference>
<dbReference type="InterPro" id="IPR000890">
    <property type="entry name" value="Aliphatic_acid_kin_short-chain"/>
</dbReference>
<dbReference type="InterPro" id="IPR023865">
    <property type="entry name" value="Aliphatic_acid_kinase_CS"/>
</dbReference>
<dbReference type="InterPro" id="IPR043129">
    <property type="entry name" value="ATPase_NBD"/>
</dbReference>
<dbReference type="NCBIfam" id="TIGR00016">
    <property type="entry name" value="ackA"/>
    <property type="match status" value="1"/>
</dbReference>
<dbReference type="PANTHER" id="PTHR21060">
    <property type="entry name" value="ACETATE KINASE"/>
    <property type="match status" value="1"/>
</dbReference>
<dbReference type="PANTHER" id="PTHR21060:SF15">
    <property type="entry name" value="ACETATE KINASE-RELATED"/>
    <property type="match status" value="1"/>
</dbReference>
<dbReference type="Pfam" id="PF00871">
    <property type="entry name" value="Acetate_kinase"/>
    <property type="match status" value="1"/>
</dbReference>
<dbReference type="PIRSF" id="PIRSF000722">
    <property type="entry name" value="Acetate_prop_kin"/>
    <property type="match status" value="1"/>
</dbReference>
<dbReference type="PRINTS" id="PR00471">
    <property type="entry name" value="ACETATEKNASE"/>
</dbReference>
<dbReference type="SUPFAM" id="SSF53067">
    <property type="entry name" value="Actin-like ATPase domain"/>
    <property type="match status" value="2"/>
</dbReference>
<dbReference type="PROSITE" id="PS01075">
    <property type="entry name" value="ACETATE_KINASE_1"/>
    <property type="match status" value="1"/>
</dbReference>
<dbReference type="PROSITE" id="PS01076">
    <property type="entry name" value="ACETATE_KINASE_2"/>
    <property type="match status" value="1"/>
</dbReference>
<reference key="1">
    <citation type="journal article" date="2006" name="Nat. Genet.">
        <title>The multidrug-resistant human pathogen Clostridium difficile has a highly mobile, mosaic genome.</title>
        <authorList>
            <person name="Sebaihia M."/>
            <person name="Wren B.W."/>
            <person name="Mullany P."/>
            <person name="Fairweather N.F."/>
            <person name="Minton N."/>
            <person name="Stabler R."/>
            <person name="Thomson N.R."/>
            <person name="Roberts A.P."/>
            <person name="Cerdeno-Tarraga A.M."/>
            <person name="Wang H."/>
            <person name="Holden M.T.G."/>
            <person name="Wright A."/>
            <person name="Churcher C."/>
            <person name="Quail M.A."/>
            <person name="Baker S."/>
            <person name="Bason N."/>
            <person name="Brooks K."/>
            <person name="Chillingworth T."/>
            <person name="Cronin A."/>
            <person name="Davis P."/>
            <person name="Dowd L."/>
            <person name="Fraser A."/>
            <person name="Feltwell T."/>
            <person name="Hance Z."/>
            <person name="Holroyd S."/>
            <person name="Jagels K."/>
            <person name="Moule S."/>
            <person name="Mungall K."/>
            <person name="Price C."/>
            <person name="Rabbinowitsch E."/>
            <person name="Sharp S."/>
            <person name="Simmonds M."/>
            <person name="Stevens K."/>
            <person name="Unwin L."/>
            <person name="Whithead S."/>
            <person name="Dupuy B."/>
            <person name="Dougan G."/>
            <person name="Barrell B."/>
            <person name="Parkhill J."/>
        </authorList>
    </citation>
    <scope>NUCLEOTIDE SEQUENCE [LARGE SCALE GENOMIC DNA]</scope>
    <source>
        <strain>630</strain>
    </source>
</reference>
<comment type="function">
    <text evidence="1">Catalyzes the formation of acetyl phosphate from acetate and ATP. Can also catalyze the reverse reaction.</text>
</comment>
<comment type="catalytic activity">
    <reaction evidence="1">
        <text>acetate + ATP = acetyl phosphate + ADP</text>
        <dbReference type="Rhea" id="RHEA:11352"/>
        <dbReference type="ChEBI" id="CHEBI:22191"/>
        <dbReference type="ChEBI" id="CHEBI:30089"/>
        <dbReference type="ChEBI" id="CHEBI:30616"/>
        <dbReference type="ChEBI" id="CHEBI:456216"/>
        <dbReference type="EC" id="2.7.2.1"/>
    </reaction>
</comment>
<comment type="cofactor">
    <cofactor evidence="1">
        <name>Mg(2+)</name>
        <dbReference type="ChEBI" id="CHEBI:18420"/>
    </cofactor>
    <cofactor evidence="1">
        <name>Mn(2+)</name>
        <dbReference type="ChEBI" id="CHEBI:29035"/>
    </cofactor>
    <text evidence="1">Mg(2+). Can also accept Mn(2+).</text>
</comment>
<comment type="pathway">
    <text evidence="1">Metabolic intermediate biosynthesis; acetyl-CoA biosynthesis; acetyl-CoA from acetate: step 1/2.</text>
</comment>
<comment type="subunit">
    <text evidence="1">Homodimer.</text>
</comment>
<comment type="subcellular location">
    <subcellularLocation>
        <location evidence="1">Cytoplasm</location>
    </subcellularLocation>
</comment>
<comment type="similarity">
    <text evidence="1">Belongs to the acetokinase family.</text>
</comment>
<name>ACKA_CLOD6</name>
<proteinExistence type="inferred from homology"/>